<keyword id="KW-0067">ATP-binding</keyword>
<keyword id="KW-0963">Cytoplasm</keyword>
<keyword id="KW-0436">Ligase</keyword>
<keyword id="KW-0547">Nucleotide-binding</keyword>
<keyword id="KW-0658">Purine biosynthesis</keyword>
<keyword id="KW-1185">Reference proteome</keyword>
<proteinExistence type="inferred from homology"/>
<accession>A9AGA9</accession>
<evidence type="ECO:0000255" key="1">
    <source>
        <dbReference type="HAMAP-Rule" id="MF_00741"/>
    </source>
</evidence>
<sequence>MNPPKSAPDAQGLSYRDAGVDIDAGDALVDKIKPFAKKTLRDGVLGGIGGFGALFEVPKKYKEPVLVSGTDGVGTKLKLAFHLNKHDTVGQDLVAMSVNDILVQGAEPLFFLDYFACGKLDVDTAATVVKGIAQGCELSGCALIGGETAEMPGMYPDGEYDLAGFAVGAVEKSKIIDGSTIAEGDVVLGLASSGIHSNGFSLVRKIIERANPDLSADFHGRSLADALMAPTRIYVKPLLALMQKIAVKGMAHITGGGLVENIPRVLREGLTAELDQKAWPLPPLFKWLQEHGGVADAEMHRVFNCGIGMAVIVSAADADAAVSDLTAAGEQVWKIGTVRASREGEAQTVVV</sequence>
<comment type="catalytic activity">
    <reaction evidence="1">
        <text>2-formamido-N(1)-(5-O-phospho-beta-D-ribosyl)acetamidine + ATP = 5-amino-1-(5-phospho-beta-D-ribosyl)imidazole + ADP + phosphate + H(+)</text>
        <dbReference type="Rhea" id="RHEA:23032"/>
        <dbReference type="ChEBI" id="CHEBI:15378"/>
        <dbReference type="ChEBI" id="CHEBI:30616"/>
        <dbReference type="ChEBI" id="CHEBI:43474"/>
        <dbReference type="ChEBI" id="CHEBI:137981"/>
        <dbReference type="ChEBI" id="CHEBI:147287"/>
        <dbReference type="ChEBI" id="CHEBI:456216"/>
        <dbReference type="EC" id="6.3.3.1"/>
    </reaction>
</comment>
<comment type="pathway">
    <text evidence="1">Purine metabolism; IMP biosynthesis via de novo pathway; 5-amino-1-(5-phospho-D-ribosyl)imidazole from N(2)-formyl-N(1)-(5-phospho-D-ribosyl)glycinamide: step 2/2.</text>
</comment>
<comment type="subcellular location">
    <subcellularLocation>
        <location evidence="1">Cytoplasm</location>
    </subcellularLocation>
</comment>
<comment type="similarity">
    <text evidence="1">Belongs to the AIR synthase family.</text>
</comment>
<organism>
    <name type="scientific">Burkholderia multivorans (strain ATCC 17616 / 249)</name>
    <dbReference type="NCBI Taxonomy" id="395019"/>
    <lineage>
        <taxon>Bacteria</taxon>
        <taxon>Pseudomonadati</taxon>
        <taxon>Pseudomonadota</taxon>
        <taxon>Betaproteobacteria</taxon>
        <taxon>Burkholderiales</taxon>
        <taxon>Burkholderiaceae</taxon>
        <taxon>Burkholderia</taxon>
        <taxon>Burkholderia cepacia complex</taxon>
    </lineage>
</organism>
<protein>
    <recommendedName>
        <fullName evidence="1">Phosphoribosylformylglycinamidine cyclo-ligase</fullName>
        <ecNumber evidence="1">6.3.3.1</ecNumber>
    </recommendedName>
    <alternativeName>
        <fullName evidence="1">AIR synthase</fullName>
    </alternativeName>
    <alternativeName>
        <fullName evidence="1">AIRS</fullName>
    </alternativeName>
    <alternativeName>
        <fullName evidence="1">Phosphoribosyl-aminoimidazole synthetase</fullName>
    </alternativeName>
</protein>
<gene>
    <name evidence="1" type="primary">purM</name>
    <name type="ordered locus">Bmul_2624</name>
    <name type="ordered locus">BMULJ_00614</name>
</gene>
<dbReference type="EC" id="6.3.3.1" evidence="1"/>
<dbReference type="EMBL" id="CP000868">
    <property type="protein sequence ID" value="ABX16308.1"/>
    <property type="molecule type" value="Genomic_DNA"/>
</dbReference>
<dbReference type="EMBL" id="AP009385">
    <property type="protein sequence ID" value="BAG42578.1"/>
    <property type="molecule type" value="Genomic_DNA"/>
</dbReference>
<dbReference type="RefSeq" id="WP_012214073.1">
    <property type="nucleotide sequence ID" value="NC_010084.1"/>
</dbReference>
<dbReference type="SMR" id="A9AGA9"/>
<dbReference type="STRING" id="395019.BMULJ_00614"/>
<dbReference type="KEGG" id="bmj:BMULJ_00614"/>
<dbReference type="KEGG" id="bmu:Bmul_2624"/>
<dbReference type="eggNOG" id="COG0150">
    <property type="taxonomic scope" value="Bacteria"/>
</dbReference>
<dbReference type="HOGENOM" id="CLU_047116_0_0_4"/>
<dbReference type="UniPathway" id="UPA00074">
    <property type="reaction ID" value="UER00129"/>
</dbReference>
<dbReference type="Proteomes" id="UP000008815">
    <property type="component" value="Chromosome 1"/>
</dbReference>
<dbReference type="GO" id="GO:0005829">
    <property type="term" value="C:cytosol"/>
    <property type="evidence" value="ECO:0007669"/>
    <property type="project" value="TreeGrafter"/>
</dbReference>
<dbReference type="GO" id="GO:0005524">
    <property type="term" value="F:ATP binding"/>
    <property type="evidence" value="ECO:0007669"/>
    <property type="project" value="UniProtKB-KW"/>
</dbReference>
<dbReference type="GO" id="GO:0004637">
    <property type="term" value="F:phosphoribosylamine-glycine ligase activity"/>
    <property type="evidence" value="ECO:0007669"/>
    <property type="project" value="TreeGrafter"/>
</dbReference>
<dbReference type="GO" id="GO:0004641">
    <property type="term" value="F:phosphoribosylformylglycinamidine cyclo-ligase activity"/>
    <property type="evidence" value="ECO:0007669"/>
    <property type="project" value="UniProtKB-UniRule"/>
</dbReference>
<dbReference type="GO" id="GO:0006189">
    <property type="term" value="P:'de novo' IMP biosynthetic process"/>
    <property type="evidence" value="ECO:0007669"/>
    <property type="project" value="UniProtKB-UniRule"/>
</dbReference>
<dbReference type="GO" id="GO:0046084">
    <property type="term" value="P:adenine biosynthetic process"/>
    <property type="evidence" value="ECO:0007669"/>
    <property type="project" value="TreeGrafter"/>
</dbReference>
<dbReference type="CDD" id="cd02196">
    <property type="entry name" value="PurM"/>
    <property type="match status" value="1"/>
</dbReference>
<dbReference type="FunFam" id="3.30.1330.10:FF:000001">
    <property type="entry name" value="Phosphoribosylformylglycinamidine cyclo-ligase"/>
    <property type="match status" value="1"/>
</dbReference>
<dbReference type="FunFam" id="3.90.650.10:FF:000001">
    <property type="entry name" value="Phosphoribosylformylglycinamidine cyclo-ligase"/>
    <property type="match status" value="1"/>
</dbReference>
<dbReference type="Gene3D" id="3.90.650.10">
    <property type="entry name" value="PurM-like C-terminal domain"/>
    <property type="match status" value="1"/>
</dbReference>
<dbReference type="Gene3D" id="3.30.1330.10">
    <property type="entry name" value="PurM-like, N-terminal domain"/>
    <property type="match status" value="1"/>
</dbReference>
<dbReference type="HAMAP" id="MF_00741">
    <property type="entry name" value="AIRS"/>
    <property type="match status" value="1"/>
</dbReference>
<dbReference type="InterPro" id="IPR010918">
    <property type="entry name" value="PurM-like_C_dom"/>
</dbReference>
<dbReference type="InterPro" id="IPR036676">
    <property type="entry name" value="PurM-like_C_sf"/>
</dbReference>
<dbReference type="InterPro" id="IPR016188">
    <property type="entry name" value="PurM-like_N"/>
</dbReference>
<dbReference type="InterPro" id="IPR036921">
    <property type="entry name" value="PurM-like_N_sf"/>
</dbReference>
<dbReference type="InterPro" id="IPR004733">
    <property type="entry name" value="PurM_cligase"/>
</dbReference>
<dbReference type="NCBIfam" id="TIGR00878">
    <property type="entry name" value="purM"/>
    <property type="match status" value="1"/>
</dbReference>
<dbReference type="PANTHER" id="PTHR10520:SF12">
    <property type="entry name" value="TRIFUNCTIONAL PURINE BIOSYNTHETIC PROTEIN ADENOSINE-3"/>
    <property type="match status" value="1"/>
</dbReference>
<dbReference type="PANTHER" id="PTHR10520">
    <property type="entry name" value="TRIFUNCTIONAL PURINE BIOSYNTHETIC PROTEIN ADENOSINE-3-RELATED"/>
    <property type="match status" value="1"/>
</dbReference>
<dbReference type="Pfam" id="PF00586">
    <property type="entry name" value="AIRS"/>
    <property type="match status" value="1"/>
</dbReference>
<dbReference type="Pfam" id="PF02769">
    <property type="entry name" value="AIRS_C"/>
    <property type="match status" value="1"/>
</dbReference>
<dbReference type="SUPFAM" id="SSF56042">
    <property type="entry name" value="PurM C-terminal domain-like"/>
    <property type="match status" value="1"/>
</dbReference>
<dbReference type="SUPFAM" id="SSF55326">
    <property type="entry name" value="PurM N-terminal domain-like"/>
    <property type="match status" value="1"/>
</dbReference>
<name>PUR5_BURM1</name>
<feature type="chain" id="PRO_1000193004" description="Phosphoribosylformylglycinamidine cyclo-ligase">
    <location>
        <begin position="1"/>
        <end position="351"/>
    </location>
</feature>
<reference key="1">
    <citation type="submission" date="2007-10" db="EMBL/GenBank/DDBJ databases">
        <title>Complete sequence of chromosome 1 of Burkholderia multivorans ATCC 17616.</title>
        <authorList>
            <person name="Copeland A."/>
            <person name="Lucas S."/>
            <person name="Lapidus A."/>
            <person name="Barry K."/>
            <person name="Glavina del Rio T."/>
            <person name="Dalin E."/>
            <person name="Tice H."/>
            <person name="Pitluck S."/>
            <person name="Chain P."/>
            <person name="Malfatti S."/>
            <person name="Shin M."/>
            <person name="Vergez L."/>
            <person name="Schmutz J."/>
            <person name="Larimer F."/>
            <person name="Land M."/>
            <person name="Hauser L."/>
            <person name="Kyrpides N."/>
            <person name="Kim E."/>
            <person name="Tiedje J."/>
            <person name="Richardson P."/>
        </authorList>
    </citation>
    <scope>NUCLEOTIDE SEQUENCE [LARGE SCALE GENOMIC DNA]</scope>
    <source>
        <strain>ATCC 17616 / 249</strain>
    </source>
</reference>
<reference key="2">
    <citation type="submission" date="2007-04" db="EMBL/GenBank/DDBJ databases">
        <title>Complete genome sequence of Burkholderia multivorans ATCC 17616.</title>
        <authorList>
            <person name="Ohtsubo Y."/>
            <person name="Yamashita A."/>
            <person name="Kurokawa K."/>
            <person name="Takami H."/>
            <person name="Yuhara S."/>
            <person name="Nishiyama E."/>
            <person name="Endo R."/>
            <person name="Miyazaki R."/>
            <person name="Ono A."/>
            <person name="Yano K."/>
            <person name="Ito M."/>
            <person name="Sota M."/>
            <person name="Yuji N."/>
            <person name="Hattori M."/>
            <person name="Tsuda M."/>
        </authorList>
    </citation>
    <scope>NUCLEOTIDE SEQUENCE [LARGE SCALE GENOMIC DNA]</scope>
    <source>
        <strain>ATCC 17616 / 249</strain>
    </source>
</reference>